<gene>
    <name type="primary">OPG155</name>
    <name type="ORF">A30L</name>
</gene>
<protein>
    <recommendedName>
        <fullName>Envelope protein OPG155</fullName>
    </recommendedName>
    <alternativeName>
        <fullName>Protein A30</fullName>
    </alternativeName>
</protein>
<reference key="1">
    <citation type="journal article" date="2001" name="FEBS Lett.">
        <title>Human monkeypox and smallpox viruses: genomic comparison.</title>
        <authorList>
            <person name="Shchelkunov S.N."/>
            <person name="Totmenin A.V."/>
            <person name="Babkin I.V."/>
            <person name="Safronov P.F."/>
            <person name="Ryazankina O.I."/>
            <person name="Petrov N.A."/>
            <person name="Gutorov V.V."/>
            <person name="Uvarova E.A."/>
            <person name="Mikheev M.V."/>
            <person name="Sisler J.R."/>
            <person name="Esposito J.J."/>
            <person name="Jahrling P.B."/>
            <person name="Moss B."/>
            <person name="Sandakhchiev L.S."/>
        </authorList>
    </citation>
    <scope>NUCLEOTIDE SEQUENCE [LARGE SCALE GENOMIC DNA]</scope>
    <source>
        <strain>Zaire-96-I-16</strain>
    </source>
</reference>
<sequence>MNSLSIFFIVVATAAVCLLFIQSYSIYENYGNIKEFNATHAAFEYSKSIGGTPALDRRVQDVNDTISDVKQKWRCVVYPGNGFVSASIFGFQAEVGPNNTRSIRKFNTMRQCIDFTFSDVINIDIYNPCIAPNINNTECQFLKSVL</sequence>
<organism>
    <name type="scientific">Monkeypox virus (strain Zaire-96-I-16)</name>
    <name type="common">MPX</name>
    <dbReference type="NCBI Taxonomy" id="619591"/>
    <lineage>
        <taxon>Viruses</taxon>
        <taxon>Varidnaviria</taxon>
        <taxon>Bamfordvirae</taxon>
        <taxon>Nucleocytoviricota</taxon>
        <taxon>Pokkesviricetes</taxon>
        <taxon>Chitovirales</taxon>
        <taxon>Poxviridae</taxon>
        <taxon>Chordopoxvirinae</taxon>
        <taxon>Orthopoxvirus</taxon>
        <taxon>Monkeypox virus</taxon>
    </lineage>
</organism>
<feature type="chain" id="PRO_0000099294" description="Envelope protein OPG155">
    <location>
        <begin position="1"/>
        <end position="146"/>
    </location>
</feature>
<feature type="transmembrane region" description="Helical; Signal-anchor for type II membrane protein" evidence="2">
    <location>
        <begin position="1"/>
        <end position="21"/>
    </location>
</feature>
<feature type="topological domain" description="Virion surface" evidence="2">
    <location>
        <begin position="22"/>
        <end position="146"/>
    </location>
</feature>
<evidence type="ECO:0000250" key="1">
    <source>
        <dbReference type="UniProtKB" id="P68633"/>
    </source>
</evidence>
<evidence type="ECO:0000255" key="2"/>
<evidence type="ECO:0000305" key="3"/>
<keyword id="KW-1015">Disulfide bond</keyword>
<keyword id="KW-1168">Fusion of virus membrane with host membrane</keyword>
<keyword id="KW-0426">Late protein</keyword>
<keyword id="KW-0472">Membrane</keyword>
<keyword id="KW-0597">Phosphoprotein</keyword>
<keyword id="KW-0735">Signal-anchor</keyword>
<keyword id="KW-0812">Transmembrane</keyword>
<keyword id="KW-1133">Transmembrane helix</keyword>
<keyword id="KW-0261">Viral envelope protein</keyword>
<keyword id="KW-1162">Viral penetration into host cytoplasm</keyword>
<keyword id="KW-0946">Virion</keyword>
<keyword id="KW-1160">Virus entry into host cell</keyword>
<organismHost>
    <name type="scientific">Cynomys gunnisoni</name>
    <name type="common">Gunnison's prairie dog</name>
    <name type="synonym">Spermophilus gunnisoni</name>
    <dbReference type="NCBI Taxonomy" id="45479"/>
</organismHost>
<organismHost>
    <name type="scientific">Cynomys leucurus</name>
    <name type="common">White-tailed prairie dog</name>
    <dbReference type="NCBI Taxonomy" id="99825"/>
</organismHost>
<organismHost>
    <name type="scientific">Cynomys ludovicianus</name>
    <name type="common">Black-tailed prairie dog</name>
    <dbReference type="NCBI Taxonomy" id="45480"/>
</organismHost>
<organismHost>
    <name type="scientific">Cynomys mexicanus</name>
    <name type="common">Mexican prairie dog</name>
    <dbReference type="NCBI Taxonomy" id="99826"/>
</organismHost>
<organismHost>
    <name type="scientific">Cynomys parvidens</name>
    <name type="common">Utah prairie dog</name>
    <dbReference type="NCBI Taxonomy" id="99827"/>
</organismHost>
<organismHost>
    <name type="scientific">Gliridae</name>
    <name type="common">dormice</name>
    <dbReference type="NCBI Taxonomy" id="30650"/>
</organismHost>
<organismHost>
    <name type="scientific">Heliosciurus ruwenzorii</name>
    <name type="common">Ruwenzori sun squirrel</name>
    <dbReference type="NCBI Taxonomy" id="226685"/>
</organismHost>
<organismHost>
    <name type="scientific">Homo sapiens</name>
    <name type="common">Human</name>
    <dbReference type="NCBI Taxonomy" id="9606"/>
</organismHost>
<organismHost>
    <name type="scientific">Mus musculus</name>
    <name type="common">Mouse</name>
    <dbReference type="NCBI Taxonomy" id="10090"/>
</organismHost>
<proteinExistence type="inferred from homology"/>
<accession>Q8V4U9</accession>
<dbReference type="EMBL" id="AF380138">
    <property type="protein sequence ID" value="AAL40598.1"/>
    <property type="molecule type" value="Genomic_DNA"/>
</dbReference>
<dbReference type="RefSeq" id="NP_536567.1">
    <property type="nucleotide sequence ID" value="NC_003310.1"/>
</dbReference>
<dbReference type="SMR" id="Q8V4U9"/>
<dbReference type="GeneID" id="928965"/>
<dbReference type="KEGG" id="vg:928965"/>
<dbReference type="Proteomes" id="UP000101269">
    <property type="component" value="Genome"/>
</dbReference>
<dbReference type="GO" id="GO:0016020">
    <property type="term" value="C:membrane"/>
    <property type="evidence" value="ECO:0007669"/>
    <property type="project" value="UniProtKB-KW"/>
</dbReference>
<dbReference type="GO" id="GO:0019031">
    <property type="term" value="C:viral envelope"/>
    <property type="evidence" value="ECO:0007669"/>
    <property type="project" value="UniProtKB-KW"/>
</dbReference>
<dbReference type="GO" id="GO:0055036">
    <property type="term" value="C:virion membrane"/>
    <property type="evidence" value="ECO:0007669"/>
    <property type="project" value="UniProtKB-SubCell"/>
</dbReference>
<dbReference type="GO" id="GO:0039663">
    <property type="term" value="P:membrane fusion involved in viral entry into host cell"/>
    <property type="evidence" value="ECO:0007669"/>
    <property type="project" value="UniProtKB-KW"/>
</dbReference>
<dbReference type="GO" id="GO:0046718">
    <property type="term" value="P:symbiont entry into host cell"/>
    <property type="evidence" value="ECO:0007669"/>
    <property type="project" value="UniProtKB-KW"/>
</dbReference>
<dbReference type="InterPro" id="IPR007664">
    <property type="entry name" value="Poxvirus_A28"/>
</dbReference>
<dbReference type="Pfam" id="PF04584">
    <property type="entry name" value="Pox_A28"/>
    <property type="match status" value="1"/>
</dbReference>
<name>PG155_MONPZ</name>
<comment type="function">
    <text evidence="1">Envelope protein required for virus entry into host cell and for cell-cell fusion (syncytium formation).</text>
</comment>
<comment type="subunit">
    <text evidence="1">Part of a stable entry-fusion complex (EFC) which is at least composed of proteins OPG143, OPG147, OPG155, OPG086, OPG094, OPG107, OPG104, and OPG099. Formation of the viral membrane is necessary for the assembly of the complex. Interacts directly with protein OPG107.</text>
</comment>
<comment type="subcellular location">
    <subcellularLocation>
        <location evidence="1">Virion membrane</location>
        <topology evidence="1">Single-pass type III membrane protein</topology>
    </subcellularLocation>
    <text evidence="1">Component of the mature virion (MV) membrane.</text>
</comment>
<comment type="PTM">
    <text evidence="1">Contains two intramolecular disulfide bonds. They are created by the viral disulfide bond formation pathway, a poxvirus-specific pathway that operates on the cytoplasmic side of the MV membranes.</text>
</comment>
<comment type="similarity">
    <text evidence="3">Belongs to the orthopoxvirus OPG155 protein family.</text>
</comment>